<feature type="chain" id="PRO_0000359187" description="Acireductone dioxygenase">
    <location>
        <begin position="1"/>
        <end position="180"/>
    </location>
</feature>
<feature type="binding site" evidence="1">
    <location>
        <position position="97"/>
    </location>
    <ligand>
        <name>Fe(2+)</name>
        <dbReference type="ChEBI" id="CHEBI:29033"/>
    </ligand>
</feature>
<feature type="binding site" evidence="1">
    <location>
        <position position="97"/>
    </location>
    <ligand>
        <name>Ni(2+)</name>
        <dbReference type="ChEBI" id="CHEBI:49786"/>
    </ligand>
</feature>
<feature type="binding site" evidence="1">
    <location>
        <position position="99"/>
    </location>
    <ligand>
        <name>Fe(2+)</name>
        <dbReference type="ChEBI" id="CHEBI:29033"/>
    </ligand>
</feature>
<feature type="binding site" evidence="1">
    <location>
        <position position="99"/>
    </location>
    <ligand>
        <name>Ni(2+)</name>
        <dbReference type="ChEBI" id="CHEBI:49786"/>
    </ligand>
</feature>
<feature type="binding site" evidence="1">
    <location>
        <position position="103"/>
    </location>
    <ligand>
        <name>Fe(2+)</name>
        <dbReference type="ChEBI" id="CHEBI:29033"/>
    </ligand>
</feature>
<feature type="binding site" evidence="1">
    <location>
        <position position="103"/>
    </location>
    <ligand>
        <name>Ni(2+)</name>
        <dbReference type="ChEBI" id="CHEBI:49786"/>
    </ligand>
</feature>
<feature type="binding site" evidence="1">
    <location>
        <position position="141"/>
    </location>
    <ligand>
        <name>Fe(2+)</name>
        <dbReference type="ChEBI" id="CHEBI:29033"/>
    </ligand>
</feature>
<feature type="binding site" evidence="1">
    <location>
        <position position="141"/>
    </location>
    <ligand>
        <name>Ni(2+)</name>
        <dbReference type="ChEBI" id="CHEBI:49786"/>
    </ligand>
</feature>
<feature type="site" description="May play a role in metal incorporation in vivo" evidence="1">
    <location>
        <position position="96"/>
    </location>
</feature>
<feature type="site" description="May play a role in transmitting local conformational changes" evidence="1">
    <location>
        <position position="102"/>
    </location>
</feature>
<feature type="site" description="Important to generate the dianion" evidence="1">
    <location>
        <position position="105"/>
    </location>
</feature>
<protein>
    <recommendedName>
        <fullName evidence="1">Acireductone dioxygenase</fullName>
    </recommendedName>
    <alternativeName>
        <fullName evidence="1">1,2-dihydroxy-3-keto-5-methylthiopentene dioxygenase</fullName>
        <shortName evidence="1">DHK-MTPene dioxygenase</shortName>
    </alternativeName>
    <alternativeName>
        <fullName evidence="1">Acireductone dioxygenase (Fe(2+)-requiring)</fullName>
        <shortName evidence="1">ARD'</shortName>
        <shortName evidence="1">Fe-ARD</shortName>
        <ecNumber evidence="1">1.13.11.54</ecNumber>
    </alternativeName>
    <alternativeName>
        <fullName evidence="1">Acireductone dioxygenase (Ni(2+)-requiring)</fullName>
        <shortName evidence="1">ARD</shortName>
        <shortName evidence="1">Ni-ARD</shortName>
        <ecNumber evidence="1">1.13.11.53</ecNumber>
    </alternativeName>
</protein>
<sequence>MSALTIYSETETREPLWHSTDAAEIADKLNARGVRFERWEADRDLGQDPAAETVINAYQHAIDKLVAEKGYQSWDVISLRADNPQKEALRAKFLNEHTHGEDEVRFFVEGAGLFCLHIDDQVYQVLCEKNDLISVPAGTPHWFDMGSEPNFTAIRIFDNPEGWIAQFTGDAIADAYPRLP</sequence>
<gene>
    <name evidence="1" type="primary">mtnD</name>
    <name type="ordered locus">Ent638_1141</name>
</gene>
<keyword id="KW-0028">Amino-acid biosynthesis</keyword>
<keyword id="KW-0223">Dioxygenase</keyword>
<keyword id="KW-0408">Iron</keyword>
<keyword id="KW-0479">Metal-binding</keyword>
<keyword id="KW-0486">Methionine biosynthesis</keyword>
<keyword id="KW-0533">Nickel</keyword>
<keyword id="KW-0560">Oxidoreductase</keyword>
<evidence type="ECO:0000255" key="1">
    <source>
        <dbReference type="HAMAP-Rule" id="MF_01682"/>
    </source>
</evidence>
<proteinExistence type="inferred from homology"/>
<reference key="1">
    <citation type="journal article" date="2010" name="PLoS Genet.">
        <title>Genome sequence of the plant growth promoting endophytic bacterium Enterobacter sp. 638.</title>
        <authorList>
            <person name="Taghavi S."/>
            <person name="van der Lelie D."/>
            <person name="Hoffman A."/>
            <person name="Zhang Y.B."/>
            <person name="Walla M.D."/>
            <person name="Vangronsveld J."/>
            <person name="Newman L."/>
            <person name="Monchy S."/>
        </authorList>
    </citation>
    <scope>NUCLEOTIDE SEQUENCE [LARGE SCALE GENOMIC DNA]</scope>
    <source>
        <strain>638</strain>
    </source>
</reference>
<comment type="function">
    <text evidence="1">Catalyzes 2 different reactions between oxygen and the acireductone 1,2-dihydroxy-3-keto-5-methylthiopentene (DHK-MTPene) depending upon the metal bound in the active site. Fe-containing acireductone dioxygenase (Fe-ARD) produces formate and 2-keto-4-methylthiobutyrate (KMTB), the alpha-ketoacid precursor of methionine in the methionine recycle pathway. Ni-containing acireductone dioxygenase (Ni-ARD) produces methylthiopropionate, carbon monoxide and formate, and does not lie on the methionine recycle pathway.</text>
</comment>
<comment type="catalytic activity">
    <reaction evidence="1">
        <text>1,2-dihydroxy-5-(methylsulfanyl)pent-1-en-3-one + O2 = 3-(methylsulfanyl)propanoate + CO + formate + 2 H(+)</text>
        <dbReference type="Rhea" id="RHEA:14161"/>
        <dbReference type="ChEBI" id="CHEBI:15378"/>
        <dbReference type="ChEBI" id="CHEBI:15379"/>
        <dbReference type="ChEBI" id="CHEBI:15740"/>
        <dbReference type="ChEBI" id="CHEBI:17245"/>
        <dbReference type="ChEBI" id="CHEBI:49016"/>
        <dbReference type="ChEBI" id="CHEBI:49252"/>
        <dbReference type="EC" id="1.13.11.53"/>
    </reaction>
</comment>
<comment type="catalytic activity">
    <reaction evidence="1">
        <text>1,2-dihydroxy-5-(methylsulfanyl)pent-1-en-3-one + O2 = 4-methylsulfanyl-2-oxobutanoate + formate + 2 H(+)</text>
        <dbReference type="Rhea" id="RHEA:24504"/>
        <dbReference type="ChEBI" id="CHEBI:15378"/>
        <dbReference type="ChEBI" id="CHEBI:15379"/>
        <dbReference type="ChEBI" id="CHEBI:15740"/>
        <dbReference type="ChEBI" id="CHEBI:16723"/>
        <dbReference type="ChEBI" id="CHEBI:49252"/>
        <dbReference type="EC" id="1.13.11.54"/>
    </reaction>
</comment>
<comment type="cofactor">
    <cofactor evidence="1">
        <name>Fe(2+)</name>
        <dbReference type="ChEBI" id="CHEBI:29033"/>
    </cofactor>
    <text evidence="1">Binds 1 Fe(2+) cation per monomer.</text>
</comment>
<comment type="cofactor">
    <cofactor evidence="1">
        <name>Ni(2+)</name>
        <dbReference type="ChEBI" id="CHEBI:49786"/>
    </cofactor>
    <text evidence="1">Binds 1 nickel ion per monomer.</text>
</comment>
<comment type="pathway">
    <text evidence="1">Amino-acid biosynthesis; L-methionine biosynthesis via salvage pathway; L-methionine from S-methyl-5-thio-alpha-D-ribose 1-phosphate: step 5/6.</text>
</comment>
<comment type="subunit">
    <text evidence="1">Monomer.</text>
</comment>
<comment type="similarity">
    <text evidence="1">Belongs to the acireductone dioxygenase (ARD) family.</text>
</comment>
<accession>A4W7Z2</accession>
<organism>
    <name type="scientific">Enterobacter sp. (strain 638)</name>
    <dbReference type="NCBI Taxonomy" id="399742"/>
    <lineage>
        <taxon>Bacteria</taxon>
        <taxon>Pseudomonadati</taxon>
        <taxon>Pseudomonadota</taxon>
        <taxon>Gammaproteobacteria</taxon>
        <taxon>Enterobacterales</taxon>
        <taxon>Enterobacteriaceae</taxon>
        <taxon>Enterobacter</taxon>
    </lineage>
</organism>
<name>MTND_ENT38</name>
<dbReference type="EC" id="1.13.11.54" evidence="1"/>
<dbReference type="EC" id="1.13.11.53" evidence="1"/>
<dbReference type="EMBL" id="CP000653">
    <property type="protein sequence ID" value="ABP59822.1"/>
    <property type="molecule type" value="Genomic_DNA"/>
</dbReference>
<dbReference type="RefSeq" id="WP_012016542.1">
    <property type="nucleotide sequence ID" value="NC_009436.1"/>
</dbReference>
<dbReference type="SMR" id="A4W7Z2"/>
<dbReference type="STRING" id="399742.Ent638_1141"/>
<dbReference type="KEGG" id="ent:Ent638_1141"/>
<dbReference type="eggNOG" id="COG1791">
    <property type="taxonomic scope" value="Bacteria"/>
</dbReference>
<dbReference type="HOGENOM" id="CLU_125400_0_0_6"/>
<dbReference type="OrthoDB" id="9795636at2"/>
<dbReference type="UniPathway" id="UPA00904">
    <property type="reaction ID" value="UER00878"/>
</dbReference>
<dbReference type="Proteomes" id="UP000000230">
    <property type="component" value="Chromosome"/>
</dbReference>
<dbReference type="GO" id="GO:0010308">
    <property type="term" value="F:acireductone dioxygenase (Ni2+-requiring) activity"/>
    <property type="evidence" value="ECO:0007669"/>
    <property type="project" value="UniProtKB-UniRule"/>
</dbReference>
<dbReference type="GO" id="GO:0010309">
    <property type="term" value="F:acireductone dioxygenase [iron(II)-requiring] activity"/>
    <property type="evidence" value="ECO:0007669"/>
    <property type="project" value="UniProtKB-UniRule"/>
</dbReference>
<dbReference type="GO" id="GO:0005506">
    <property type="term" value="F:iron ion binding"/>
    <property type="evidence" value="ECO:0007669"/>
    <property type="project" value="UniProtKB-UniRule"/>
</dbReference>
<dbReference type="GO" id="GO:0016151">
    <property type="term" value="F:nickel cation binding"/>
    <property type="evidence" value="ECO:0007669"/>
    <property type="project" value="UniProtKB-UniRule"/>
</dbReference>
<dbReference type="GO" id="GO:0019509">
    <property type="term" value="P:L-methionine salvage from methylthioadenosine"/>
    <property type="evidence" value="ECO:0007669"/>
    <property type="project" value="UniProtKB-UniRule"/>
</dbReference>
<dbReference type="GO" id="GO:0019284">
    <property type="term" value="P:L-methionine salvage from S-adenosylmethionine"/>
    <property type="evidence" value="ECO:0007669"/>
    <property type="project" value="InterPro"/>
</dbReference>
<dbReference type="CDD" id="cd02232">
    <property type="entry name" value="cupin_ARD"/>
    <property type="match status" value="1"/>
</dbReference>
<dbReference type="Gene3D" id="2.60.120.10">
    <property type="entry name" value="Jelly Rolls"/>
    <property type="match status" value="1"/>
</dbReference>
<dbReference type="HAMAP" id="MF_01682">
    <property type="entry name" value="Salvage_MtnD"/>
    <property type="match status" value="1"/>
</dbReference>
<dbReference type="InterPro" id="IPR004313">
    <property type="entry name" value="ARD"/>
</dbReference>
<dbReference type="InterPro" id="IPR023956">
    <property type="entry name" value="ARD_bac"/>
</dbReference>
<dbReference type="InterPro" id="IPR014710">
    <property type="entry name" value="RmlC-like_jellyroll"/>
</dbReference>
<dbReference type="InterPro" id="IPR011051">
    <property type="entry name" value="RmlC_Cupin_sf"/>
</dbReference>
<dbReference type="PANTHER" id="PTHR23418">
    <property type="entry name" value="ACIREDUCTONE DIOXYGENASE"/>
    <property type="match status" value="1"/>
</dbReference>
<dbReference type="PANTHER" id="PTHR23418:SF0">
    <property type="entry name" value="ACIREDUCTONE DIOXYGENASE"/>
    <property type="match status" value="1"/>
</dbReference>
<dbReference type="Pfam" id="PF03079">
    <property type="entry name" value="ARD"/>
    <property type="match status" value="1"/>
</dbReference>
<dbReference type="SUPFAM" id="SSF51182">
    <property type="entry name" value="RmlC-like cupins"/>
    <property type="match status" value="1"/>
</dbReference>